<reference key="1">
    <citation type="journal article" date="1988" name="Proc. Natl. Acad. Sci. U.S.A.">
        <title>Sequence and nitrate regulation of the Arabidopsis thaliana mRNA encoding nitrate reductase, a metalloflavoprotein with three functional domains.</title>
        <authorList>
            <person name="Crawford N.M."/>
            <person name="Smith M."/>
            <person name="Bellissimo D.B."/>
            <person name="Davis R.W."/>
        </authorList>
    </citation>
    <scope>NUCLEOTIDE SEQUENCE [MRNA]</scope>
    <source>
        <strain>cv. Columbia</strain>
    </source>
</reference>
<reference key="2">
    <citation type="journal article" date="2000" name="Nature">
        <title>Sequence and analysis of chromosome 1 of the plant Arabidopsis thaliana.</title>
        <authorList>
            <person name="Theologis A."/>
            <person name="Ecker J.R."/>
            <person name="Palm C.J."/>
            <person name="Federspiel N.A."/>
            <person name="Kaul S."/>
            <person name="White O."/>
            <person name="Alonso J."/>
            <person name="Altafi H."/>
            <person name="Araujo R."/>
            <person name="Bowman C.L."/>
            <person name="Brooks S.Y."/>
            <person name="Buehler E."/>
            <person name="Chan A."/>
            <person name="Chao Q."/>
            <person name="Chen H."/>
            <person name="Cheuk R.F."/>
            <person name="Chin C.W."/>
            <person name="Chung M.K."/>
            <person name="Conn L."/>
            <person name="Conway A.B."/>
            <person name="Conway A.R."/>
            <person name="Creasy T.H."/>
            <person name="Dewar K."/>
            <person name="Dunn P."/>
            <person name="Etgu P."/>
            <person name="Feldblyum T.V."/>
            <person name="Feng J.-D."/>
            <person name="Fong B."/>
            <person name="Fujii C.Y."/>
            <person name="Gill J.E."/>
            <person name="Goldsmith A.D."/>
            <person name="Haas B."/>
            <person name="Hansen N.F."/>
            <person name="Hughes B."/>
            <person name="Huizar L."/>
            <person name="Hunter J.L."/>
            <person name="Jenkins J."/>
            <person name="Johnson-Hopson C."/>
            <person name="Khan S."/>
            <person name="Khaykin E."/>
            <person name="Kim C.J."/>
            <person name="Koo H.L."/>
            <person name="Kremenetskaia I."/>
            <person name="Kurtz D.B."/>
            <person name="Kwan A."/>
            <person name="Lam B."/>
            <person name="Langin-Hooper S."/>
            <person name="Lee A."/>
            <person name="Lee J.M."/>
            <person name="Lenz C.A."/>
            <person name="Li J.H."/>
            <person name="Li Y.-P."/>
            <person name="Lin X."/>
            <person name="Liu S.X."/>
            <person name="Liu Z.A."/>
            <person name="Luros J.S."/>
            <person name="Maiti R."/>
            <person name="Marziali A."/>
            <person name="Militscher J."/>
            <person name="Miranda M."/>
            <person name="Nguyen M."/>
            <person name="Nierman W.C."/>
            <person name="Osborne B.I."/>
            <person name="Pai G."/>
            <person name="Peterson J."/>
            <person name="Pham P.K."/>
            <person name="Rizzo M."/>
            <person name="Rooney T."/>
            <person name="Rowley D."/>
            <person name="Sakano H."/>
            <person name="Salzberg S.L."/>
            <person name="Schwartz J.R."/>
            <person name="Shinn P."/>
            <person name="Southwick A.M."/>
            <person name="Sun H."/>
            <person name="Tallon L.J."/>
            <person name="Tambunga G."/>
            <person name="Toriumi M.J."/>
            <person name="Town C.D."/>
            <person name="Utterback T."/>
            <person name="Van Aken S."/>
            <person name="Vaysberg M."/>
            <person name="Vysotskaia V.S."/>
            <person name="Walker M."/>
            <person name="Wu D."/>
            <person name="Yu G."/>
            <person name="Fraser C.M."/>
            <person name="Venter J.C."/>
            <person name="Davis R.W."/>
        </authorList>
    </citation>
    <scope>NUCLEOTIDE SEQUENCE [LARGE SCALE GENOMIC DNA]</scope>
    <source>
        <strain>cv. Columbia</strain>
    </source>
</reference>
<reference key="3">
    <citation type="journal article" date="2017" name="Plant J.">
        <title>Araport11: a complete reannotation of the Arabidopsis thaliana reference genome.</title>
        <authorList>
            <person name="Cheng C.Y."/>
            <person name="Krishnakumar V."/>
            <person name="Chan A.P."/>
            <person name="Thibaud-Nissen F."/>
            <person name="Schobel S."/>
            <person name="Town C.D."/>
        </authorList>
    </citation>
    <scope>GENOME REANNOTATION</scope>
    <source>
        <strain>cv. Columbia</strain>
    </source>
</reference>
<reference key="4">
    <citation type="journal article" date="2003" name="Science">
        <title>Empirical analysis of transcriptional activity in the Arabidopsis genome.</title>
        <authorList>
            <person name="Yamada K."/>
            <person name="Lim J."/>
            <person name="Dale J.M."/>
            <person name="Chen H."/>
            <person name="Shinn P."/>
            <person name="Palm C.J."/>
            <person name="Southwick A.M."/>
            <person name="Wu H.C."/>
            <person name="Kim C.J."/>
            <person name="Nguyen M."/>
            <person name="Pham P.K."/>
            <person name="Cheuk R.F."/>
            <person name="Karlin-Newmann G."/>
            <person name="Liu S.X."/>
            <person name="Lam B."/>
            <person name="Sakano H."/>
            <person name="Wu T."/>
            <person name="Yu G."/>
            <person name="Miranda M."/>
            <person name="Quach H.L."/>
            <person name="Tripp M."/>
            <person name="Chang C.H."/>
            <person name="Lee J.M."/>
            <person name="Toriumi M.J."/>
            <person name="Chan M.M."/>
            <person name="Tang C.C."/>
            <person name="Onodera C.S."/>
            <person name="Deng J.M."/>
            <person name="Akiyama K."/>
            <person name="Ansari Y."/>
            <person name="Arakawa T."/>
            <person name="Banh J."/>
            <person name="Banno F."/>
            <person name="Bowser L."/>
            <person name="Brooks S.Y."/>
            <person name="Carninci P."/>
            <person name="Chao Q."/>
            <person name="Choy N."/>
            <person name="Enju A."/>
            <person name="Goldsmith A.D."/>
            <person name="Gurjal M."/>
            <person name="Hansen N.F."/>
            <person name="Hayashizaki Y."/>
            <person name="Johnson-Hopson C."/>
            <person name="Hsuan V.W."/>
            <person name="Iida K."/>
            <person name="Karnes M."/>
            <person name="Khan S."/>
            <person name="Koesema E."/>
            <person name="Ishida J."/>
            <person name="Jiang P.X."/>
            <person name="Jones T."/>
            <person name="Kawai J."/>
            <person name="Kamiya A."/>
            <person name="Meyers C."/>
            <person name="Nakajima M."/>
            <person name="Narusaka M."/>
            <person name="Seki M."/>
            <person name="Sakurai T."/>
            <person name="Satou M."/>
            <person name="Tamse R."/>
            <person name="Vaysberg M."/>
            <person name="Wallender E.K."/>
            <person name="Wong C."/>
            <person name="Yamamura Y."/>
            <person name="Yuan S."/>
            <person name="Shinozaki K."/>
            <person name="Davis R.W."/>
            <person name="Theologis A."/>
            <person name="Ecker J.R."/>
        </authorList>
    </citation>
    <scope>NUCLEOTIDE SEQUENCE [LARGE SCALE MRNA]</scope>
    <source>
        <strain>cv. Columbia</strain>
    </source>
</reference>
<reference key="5">
    <citation type="journal article" date="1991" name="Plant Cell">
        <title>Identification of the Arabidopsis CHL3 gene as the nitrate reductase structural gene NIA2.</title>
        <authorList>
            <person name="Wilkinson J.Q."/>
            <person name="Crawford N.M."/>
        </authorList>
    </citation>
    <scope>NUCLEOTIDE SEQUENCE [GENOMIC DNA] OF 350-422</scope>
</reference>
<reference key="6">
    <citation type="journal article" date="1988" name="EMBO J.">
        <title>A new locus (NIA 1) in Arabidopsis thaliana encoding nitrate reductase.</title>
        <authorList>
            <person name="Cheng C."/>
            <person name="Dewdney J."/>
            <person name="Nam H."/>
            <person name="den Boer B.G.W."/>
            <person name="Goodman H.M."/>
        </authorList>
    </citation>
    <scope>NUCLEOTIDE SEQUENCE [MRNA] OF 522-917</scope>
</reference>
<reference key="7">
    <citation type="journal article" date="1993" name="Mol. Gen. Genet.">
        <title>Identification and characterization of a chlorate-resistant mutant of Arabidopsis thaliana with mutations in both nitrate reductase structural genes NIA1 and NIA2.</title>
        <authorList>
            <person name="Wilkinson J.Q."/>
            <person name="Crawford N.M."/>
        </authorList>
    </citation>
    <scope>HERBICIDE RESISTANCE</scope>
</reference>
<reference key="8">
    <citation type="journal article" date="2009" name="J. Proteomics">
        <title>Phosphoproteomic analysis of nuclei-enriched fractions from Arabidopsis thaliana.</title>
        <authorList>
            <person name="Jones A.M.E."/>
            <person name="MacLean D."/>
            <person name="Studholme D.J."/>
            <person name="Serna-Sanz A."/>
            <person name="Andreasson E."/>
            <person name="Rathjen J.P."/>
            <person name="Peck S.C."/>
        </authorList>
    </citation>
    <scope>IDENTIFICATION BY MASS SPECTROMETRY [LARGE SCALE ANALYSIS]</scope>
    <source>
        <strain>cv. Columbia</strain>
    </source>
</reference>
<reference key="9">
    <citation type="journal article" date="2009" name="Plant Physiol.">
        <title>Large-scale Arabidopsis phosphoproteome profiling reveals novel chloroplast kinase substrates and phosphorylation networks.</title>
        <authorList>
            <person name="Reiland S."/>
            <person name="Messerli G."/>
            <person name="Baerenfaller K."/>
            <person name="Gerrits B."/>
            <person name="Endler A."/>
            <person name="Grossmann J."/>
            <person name="Gruissem W."/>
            <person name="Baginsky S."/>
        </authorList>
    </citation>
    <scope>IDENTIFICATION BY MASS SPECTROMETRY [LARGE SCALE ANALYSIS]</scope>
</reference>
<organism>
    <name type="scientific">Arabidopsis thaliana</name>
    <name type="common">Mouse-ear cress</name>
    <dbReference type="NCBI Taxonomy" id="3702"/>
    <lineage>
        <taxon>Eukaryota</taxon>
        <taxon>Viridiplantae</taxon>
        <taxon>Streptophyta</taxon>
        <taxon>Embryophyta</taxon>
        <taxon>Tracheophyta</taxon>
        <taxon>Spermatophyta</taxon>
        <taxon>Magnoliopsida</taxon>
        <taxon>eudicotyledons</taxon>
        <taxon>Gunneridae</taxon>
        <taxon>Pentapetalae</taxon>
        <taxon>rosids</taxon>
        <taxon>malvids</taxon>
        <taxon>Brassicales</taxon>
        <taxon>Brassicaceae</taxon>
        <taxon>Camelineae</taxon>
        <taxon>Arabidopsis</taxon>
    </lineage>
</organism>
<name>NIA2_ARATH</name>
<sequence length="917" mass="102844">MAASVDNRQYARLEPGLNGVVRSYKPPVPGRSDSPKAHQNQTTNQTVFLKPAKVHDDDEDVSSEDENETHNSNAVYYKEMIRKSNAELEPSVLDPRDEYTADSWIERNPSMVRLTGKHPFNSEAPLNRLMHHGFITPVPLHYVRNHGHVPKAQWAEWTVEVTGFVKRPMKFTMDQLVSEFAYREFAATLVCAGNRRKEQNMVKKSKGFNWGSAGVSTSVWRGVPLCDVLRRCGIFSRKGGALNVCFEGSEDLPGGAGTAGSKYGTSIKKEYAMDPSRDIILAYMQNGEYLTPDHGFPVRIIIPGFIGGRMVKWLKRIIVTTKESDNFYHFKDNRVLPSLVDAELADEEGWWYKPEYIINELNINSVITTPCHEEILPINAFTTQRPYTLKGYAYSGGGKKVTRVEVTVDGGETWNVCALDHQEKPNKYGKFWCWCFWSLEVEVLDLLSAKEIAVRAWDETLNTQPEKMIWNLMGMMNNCWFRVKTNVCKPHKGEIGIVFEHPTLPGNESGGWMAKERHLEKSADAPPSLKKSVSTPFMNTTAKMYSMSEVKKHNSADSCWIIVHGHIYDCTRFLMDHPGGSDSILINAGTDCTEEFEAIHSDKAKKMLEDYRIGELITTGYSSDSSSPNNSVHGSSAVFSLLAPIGEATPVRNLALVNPRAKVPVQLVEKTSISHDVRKFRFALPVEDMVLGLPVGKHIFLCATINDKLCLRAYTPSSTVDVVGYFELVVKIYFGGVHPRFPNGGLMSQYLDSLPIGSTLEIKGPLGHVEYLGKGSFTVHGKPKFADKLAMLAGGTGITPVYQIIQAILKDPEDETEMYVIYANRTEEDILLREELDGWAEQYPDRLKVWYVVESAKEGWAYSTGFISEAIMREHIPDGLDGSALAMACGPPPMIQFAVQPNLEKMQYNIKEDFLIF</sequence>
<comment type="function">
    <text>Nitrate reductase is a key enzyme involved in the first step of nitrate assimilation in plants, fungi and bacteria.</text>
</comment>
<comment type="catalytic activity">
    <reaction>
        <text>nitrite + NAD(+) + H2O = nitrate + NADH + H(+)</text>
        <dbReference type="Rhea" id="RHEA:17913"/>
        <dbReference type="ChEBI" id="CHEBI:15377"/>
        <dbReference type="ChEBI" id="CHEBI:15378"/>
        <dbReference type="ChEBI" id="CHEBI:16301"/>
        <dbReference type="ChEBI" id="CHEBI:17632"/>
        <dbReference type="ChEBI" id="CHEBI:57540"/>
        <dbReference type="ChEBI" id="CHEBI:57945"/>
        <dbReference type="EC" id="1.7.1.1"/>
    </reaction>
</comment>
<comment type="cofactor">
    <cofactor evidence="1">
        <name>FAD</name>
        <dbReference type="ChEBI" id="CHEBI:57692"/>
    </cofactor>
    <text evidence="1">Binds 1 FAD per subunit.</text>
</comment>
<comment type="cofactor">
    <cofactor evidence="1">
        <name>heme</name>
        <dbReference type="ChEBI" id="CHEBI:30413"/>
    </cofactor>
    <text evidence="1">Binds 1 heme group per subunit.</text>
</comment>
<comment type="cofactor">
    <cofactor evidence="1">
        <name>Mo-molybdopterin</name>
        <dbReference type="ChEBI" id="CHEBI:71302"/>
    </cofactor>
    <text evidence="1">Binds 1 Mo-molybdopterin (Mo-MPT) cofactor per subunit.</text>
</comment>
<comment type="subunit">
    <text>Homodimer.</text>
</comment>
<comment type="interaction">
    <interactant intactId="EBI-4451150">
        <id>P11035</id>
    </interactant>
    <interactant intactId="EBI-763232">
        <id>O80931</id>
        <label>AS1</label>
    </interactant>
    <organismsDiffer>false</organismsDiffer>
    <experiments>4</experiments>
</comment>
<comment type="interaction">
    <interactant intactId="EBI-4451150">
        <id>P11035</id>
    </interactant>
    <interactant intactId="EBI-4426649">
        <id>Q17TI5</id>
        <label>BRX</label>
    </interactant>
    <organismsDiffer>false</organismsDiffer>
    <experiments>3</experiments>
</comment>
<comment type="interaction">
    <interactant intactId="EBI-4451150">
        <id>P11035</id>
    </interactant>
    <interactant intactId="EBI-4451150">
        <id>P11035</id>
        <label>NIA2</label>
    </interactant>
    <organismsDiffer>false</organismsDiffer>
    <experiments>5</experiments>
</comment>
<comment type="interaction">
    <interactant intactId="EBI-4451150">
        <id>P11035</id>
    </interactant>
    <interactant intactId="EBI-25512418">
        <id>Q3E9D5</id>
        <label>SAMDC4</label>
    </interactant>
    <organismsDiffer>false</organismsDiffer>
    <experiments>5</experiments>
</comment>
<comment type="interaction">
    <interactant intactId="EBI-4451150">
        <id>P11035</id>
    </interactant>
    <interactant intactId="EBI-4426557">
        <id>Q84MB2</id>
        <label>TIFY8</label>
    </interactant>
    <organismsDiffer>false</organismsDiffer>
    <experiments>4</experiments>
</comment>
<comment type="interaction">
    <interactant intactId="EBI-4451150">
        <id>P11035</id>
    </interactant>
    <interactant intactId="EBI-4424568">
        <id>Q9LVG2</id>
        <label>TOE2</label>
    </interactant>
    <organismsDiffer>false</organismsDiffer>
    <experiments>3</experiments>
</comment>
<comment type="tissue specificity">
    <text>Root, leaf, and shoot.</text>
</comment>
<comment type="miscellaneous">
    <text>When mutated confers resistance to the herbicide chlorate.</text>
</comment>
<comment type="similarity">
    <text evidence="9">Belongs to the nitrate reductase family.</text>
</comment>
<evidence type="ECO:0000250" key="1"/>
<evidence type="ECO:0000250" key="2">
    <source>
        <dbReference type="UniProtKB" id="A0A286R227"/>
    </source>
</evidence>
<evidence type="ECO:0000250" key="3">
    <source>
        <dbReference type="UniProtKB" id="P17571"/>
    </source>
</evidence>
<evidence type="ECO:0000250" key="4">
    <source>
        <dbReference type="UniProtKB" id="P49050"/>
    </source>
</evidence>
<evidence type="ECO:0000255" key="5"/>
<evidence type="ECO:0000255" key="6">
    <source>
        <dbReference type="PROSITE-ProRule" id="PRU00279"/>
    </source>
</evidence>
<evidence type="ECO:0000255" key="7">
    <source>
        <dbReference type="PROSITE-ProRule" id="PRU00716"/>
    </source>
</evidence>
<evidence type="ECO:0000256" key="8">
    <source>
        <dbReference type="SAM" id="MobiDB-lite"/>
    </source>
</evidence>
<evidence type="ECO:0000305" key="9"/>
<accession>P11035</accession>
<accession>Q7Y260</accession>
<dbReference type="EC" id="1.7.1.1"/>
<dbReference type="EMBL" id="J03240">
    <property type="protein sequence ID" value="AAA32830.1"/>
    <property type="molecule type" value="mRNA"/>
</dbReference>
<dbReference type="EMBL" id="AC007505">
    <property type="protein sequence ID" value="AAF19225.1"/>
    <property type="molecule type" value="Genomic_DNA"/>
</dbReference>
<dbReference type="EMBL" id="CP002684">
    <property type="protein sequence ID" value="AEE31891.1"/>
    <property type="molecule type" value="Genomic_DNA"/>
</dbReference>
<dbReference type="EMBL" id="AF367272">
    <property type="protein sequence ID" value="AAK56261.1"/>
    <property type="molecule type" value="mRNA"/>
</dbReference>
<dbReference type="EMBL" id="AF436835">
    <property type="protein sequence ID" value="AAL32017.1"/>
    <property type="molecule type" value="mRNA"/>
</dbReference>
<dbReference type="EMBL" id="AY037183">
    <property type="protein sequence ID" value="AAK59768.1"/>
    <property type="molecule type" value="mRNA"/>
</dbReference>
<dbReference type="EMBL" id="AY039914">
    <property type="protein sequence ID" value="AAK64018.1"/>
    <property type="molecule type" value="mRNA"/>
</dbReference>
<dbReference type="EMBL" id="AY133530">
    <property type="protein sequence ID" value="AAM91360.1"/>
    <property type="molecule type" value="mRNA"/>
</dbReference>
<dbReference type="EMBL" id="AY142568">
    <property type="protein sequence ID" value="AAN13137.1"/>
    <property type="molecule type" value="mRNA"/>
</dbReference>
<dbReference type="EMBL" id="AH004061">
    <property type="protein sequence ID" value="AAL32273.1"/>
    <property type="molecule type" value="Genomic_DNA"/>
</dbReference>
<dbReference type="EMBL" id="X13435">
    <property type="protein sequence ID" value="CAA31787.1"/>
    <property type="molecule type" value="mRNA"/>
</dbReference>
<dbReference type="PIR" id="A31821">
    <property type="entry name" value="RDMUNH"/>
</dbReference>
<dbReference type="RefSeq" id="NP_174901.1">
    <property type="nucleotide sequence ID" value="NM_103364.3"/>
</dbReference>
<dbReference type="SMR" id="P11035"/>
<dbReference type="BioGRID" id="25859">
    <property type="interactions" value="21"/>
</dbReference>
<dbReference type="FunCoup" id="P11035">
    <property type="interactions" value="48"/>
</dbReference>
<dbReference type="IntAct" id="P11035">
    <property type="interactions" value="6"/>
</dbReference>
<dbReference type="STRING" id="3702.P11035"/>
<dbReference type="iPTMnet" id="P11035"/>
<dbReference type="MetOSite" id="P11035"/>
<dbReference type="PaxDb" id="3702-AT1G37130.1"/>
<dbReference type="ProteomicsDB" id="250558"/>
<dbReference type="EnsemblPlants" id="AT1G37130.1">
    <property type="protein sequence ID" value="AT1G37130.1"/>
    <property type="gene ID" value="AT1G37130"/>
</dbReference>
<dbReference type="GeneID" id="840630"/>
<dbReference type="Gramene" id="AT1G37130.1">
    <property type="protein sequence ID" value="AT1G37130.1"/>
    <property type="gene ID" value="AT1G37130"/>
</dbReference>
<dbReference type="KEGG" id="ath:AT1G37130"/>
<dbReference type="Araport" id="AT1G37130"/>
<dbReference type="TAIR" id="AT1G37130">
    <property type="gene designation" value="NIA2"/>
</dbReference>
<dbReference type="eggNOG" id="KOG0534">
    <property type="taxonomic scope" value="Eukaryota"/>
</dbReference>
<dbReference type="eggNOG" id="KOG0535">
    <property type="taxonomic scope" value="Eukaryota"/>
</dbReference>
<dbReference type="eggNOG" id="KOG0537">
    <property type="taxonomic scope" value="Eukaryota"/>
</dbReference>
<dbReference type="HOGENOM" id="CLU_003827_4_1_1"/>
<dbReference type="InParanoid" id="P11035"/>
<dbReference type="OMA" id="MNNCWYT"/>
<dbReference type="OrthoDB" id="432685at2759"/>
<dbReference type="PhylomeDB" id="P11035"/>
<dbReference type="BioCyc" id="MetaCyc:AT1G37130-MONOMER"/>
<dbReference type="BRENDA" id="1.7.1.1">
    <property type="organism ID" value="399"/>
</dbReference>
<dbReference type="PRO" id="PR:P11035"/>
<dbReference type="Proteomes" id="UP000006548">
    <property type="component" value="Chromosome 1"/>
</dbReference>
<dbReference type="ExpressionAtlas" id="P11035">
    <property type="expression patterns" value="baseline and differential"/>
</dbReference>
<dbReference type="GO" id="GO:0005634">
    <property type="term" value="C:nucleus"/>
    <property type="evidence" value="ECO:0007005"/>
    <property type="project" value="TAIR"/>
</dbReference>
<dbReference type="GO" id="GO:0000325">
    <property type="term" value="C:plant-type vacuole"/>
    <property type="evidence" value="ECO:0007005"/>
    <property type="project" value="TAIR"/>
</dbReference>
<dbReference type="GO" id="GO:0071949">
    <property type="term" value="F:FAD binding"/>
    <property type="evidence" value="ECO:0000250"/>
    <property type="project" value="UniProtKB"/>
</dbReference>
<dbReference type="GO" id="GO:0020037">
    <property type="term" value="F:heme binding"/>
    <property type="evidence" value="ECO:0007669"/>
    <property type="project" value="InterPro"/>
</dbReference>
<dbReference type="GO" id="GO:0042802">
    <property type="term" value="F:identical protein binding"/>
    <property type="evidence" value="ECO:0000353"/>
    <property type="project" value="IntAct"/>
</dbReference>
<dbReference type="GO" id="GO:0030151">
    <property type="term" value="F:molybdenum ion binding"/>
    <property type="evidence" value="ECO:0000250"/>
    <property type="project" value="UniProtKB"/>
</dbReference>
<dbReference type="GO" id="GO:0043546">
    <property type="term" value="F:molybdopterin cofactor binding"/>
    <property type="evidence" value="ECO:0007669"/>
    <property type="project" value="InterPro"/>
</dbReference>
<dbReference type="GO" id="GO:0003729">
    <property type="term" value="F:mRNA binding"/>
    <property type="evidence" value="ECO:0000314"/>
    <property type="project" value="TAIR"/>
</dbReference>
<dbReference type="GO" id="GO:0009703">
    <property type="term" value="F:nitrate reductase (NADH) activity"/>
    <property type="evidence" value="ECO:0000314"/>
    <property type="project" value="TAIR"/>
</dbReference>
<dbReference type="GO" id="GO:0050464">
    <property type="term" value="F:nitrate reductase (NADPH) activity"/>
    <property type="evidence" value="ECO:0007669"/>
    <property type="project" value="InterPro"/>
</dbReference>
<dbReference type="GO" id="GO:0008940">
    <property type="term" value="F:nitrate reductase activity"/>
    <property type="evidence" value="ECO:0000314"/>
    <property type="project" value="TAIR"/>
</dbReference>
<dbReference type="GO" id="GO:0042128">
    <property type="term" value="P:nitrate assimilation"/>
    <property type="evidence" value="ECO:0000315"/>
    <property type="project" value="TAIR"/>
</dbReference>
<dbReference type="GO" id="GO:0006809">
    <property type="term" value="P:nitric oxide biosynthetic process"/>
    <property type="evidence" value="ECO:0000315"/>
    <property type="project" value="TAIR"/>
</dbReference>
<dbReference type="GO" id="GO:0009635">
    <property type="term" value="P:response to herbicide"/>
    <property type="evidence" value="ECO:0007669"/>
    <property type="project" value="UniProtKB-KW"/>
</dbReference>
<dbReference type="GO" id="GO:0009416">
    <property type="term" value="P:response to light stimulus"/>
    <property type="evidence" value="ECO:0000315"/>
    <property type="project" value="TAIR"/>
</dbReference>
<dbReference type="GO" id="GO:0009610">
    <property type="term" value="P:response to symbiotic fungus"/>
    <property type="evidence" value="ECO:0000270"/>
    <property type="project" value="TAIR"/>
</dbReference>
<dbReference type="CDD" id="cd06183">
    <property type="entry name" value="cyt_b5_reduct_like"/>
    <property type="match status" value="1"/>
</dbReference>
<dbReference type="CDD" id="cd02112">
    <property type="entry name" value="eukary_NR_Moco"/>
    <property type="match status" value="1"/>
</dbReference>
<dbReference type="FunFam" id="2.40.30.10:FF:000021">
    <property type="entry name" value="NADH-cytochrome b5 reductase"/>
    <property type="match status" value="1"/>
</dbReference>
<dbReference type="FunFam" id="2.60.40.650:FF:000001">
    <property type="entry name" value="Nitrate reductase"/>
    <property type="match status" value="1"/>
</dbReference>
<dbReference type="FunFam" id="3.10.120.10:FF:000008">
    <property type="entry name" value="Nitrate reductase"/>
    <property type="match status" value="1"/>
</dbReference>
<dbReference type="FunFam" id="3.90.420.10:FF:000003">
    <property type="entry name" value="Nitrate reductase"/>
    <property type="match status" value="1"/>
</dbReference>
<dbReference type="FunFam" id="3.40.50.80:FF:000025">
    <property type="entry name" value="Nitrate reductase [NADH]"/>
    <property type="match status" value="1"/>
</dbReference>
<dbReference type="Gene3D" id="2.60.40.650">
    <property type="match status" value="1"/>
</dbReference>
<dbReference type="Gene3D" id="3.10.120.10">
    <property type="entry name" value="Cytochrome b5-like heme/steroid binding domain"/>
    <property type="match status" value="1"/>
</dbReference>
<dbReference type="Gene3D" id="3.40.50.80">
    <property type="entry name" value="Nucleotide-binding domain of ferredoxin-NADP reductase (FNR) module"/>
    <property type="match status" value="1"/>
</dbReference>
<dbReference type="Gene3D" id="3.90.420.10">
    <property type="entry name" value="Oxidoreductase, molybdopterin-binding domain"/>
    <property type="match status" value="1"/>
</dbReference>
<dbReference type="Gene3D" id="2.40.30.10">
    <property type="entry name" value="Translation factors"/>
    <property type="match status" value="1"/>
</dbReference>
<dbReference type="InterPro" id="IPR008333">
    <property type="entry name" value="Cbr1-like_FAD-bd_dom"/>
</dbReference>
<dbReference type="InterPro" id="IPR001199">
    <property type="entry name" value="Cyt_B5-like_heme/steroid-bd"/>
</dbReference>
<dbReference type="InterPro" id="IPR036400">
    <property type="entry name" value="Cyt_B5-like_heme/steroid_sf"/>
</dbReference>
<dbReference type="InterPro" id="IPR018506">
    <property type="entry name" value="Cyt_B5_heme-BS"/>
</dbReference>
<dbReference type="InterPro" id="IPR017927">
    <property type="entry name" value="FAD-bd_FR_type"/>
</dbReference>
<dbReference type="InterPro" id="IPR001709">
    <property type="entry name" value="Flavoprot_Pyr_Nucl_cyt_Rdtase"/>
</dbReference>
<dbReference type="InterPro" id="IPR039261">
    <property type="entry name" value="FNR_nucleotide-bd"/>
</dbReference>
<dbReference type="InterPro" id="IPR014756">
    <property type="entry name" value="Ig_E-set"/>
</dbReference>
<dbReference type="InterPro" id="IPR005066">
    <property type="entry name" value="MoCF_OxRdtse_dimer"/>
</dbReference>
<dbReference type="InterPro" id="IPR008335">
    <property type="entry name" value="Mopterin_OxRdtase_euk"/>
</dbReference>
<dbReference type="InterPro" id="IPR012137">
    <property type="entry name" value="Nitr_rd_NADH"/>
</dbReference>
<dbReference type="InterPro" id="IPR001433">
    <property type="entry name" value="OxRdtase_FAD/NAD-bd"/>
</dbReference>
<dbReference type="InterPro" id="IPR000572">
    <property type="entry name" value="OxRdtase_Mopterin-bd_dom"/>
</dbReference>
<dbReference type="InterPro" id="IPR036374">
    <property type="entry name" value="OxRdtase_Mopterin-bd_sf"/>
</dbReference>
<dbReference type="InterPro" id="IPR022407">
    <property type="entry name" value="OxRdtase_Mopterin_BS"/>
</dbReference>
<dbReference type="InterPro" id="IPR017938">
    <property type="entry name" value="Riboflavin_synthase-like_b-brl"/>
</dbReference>
<dbReference type="PANTHER" id="PTHR19372:SF7">
    <property type="entry name" value="SULFITE OXIDASE, MITOCHONDRIAL"/>
    <property type="match status" value="1"/>
</dbReference>
<dbReference type="PANTHER" id="PTHR19372">
    <property type="entry name" value="SULFITE REDUCTASE"/>
    <property type="match status" value="1"/>
</dbReference>
<dbReference type="Pfam" id="PF00173">
    <property type="entry name" value="Cyt-b5"/>
    <property type="match status" value="1"/>
</dbReference>
<dbReference type="Pfam" id="PF00970">
    <property type="entry name" value="FAD_binding_6"/>
    <property type="match status" value="1"/>
</dbReference>
<dbReference type="Pfam" id="PF03404">
    <property type="entry name" value="Mo-co_dimer"/>
    <property type="match status" value="1"/>
</dbReference>
<dbReference type="Pfam" id="PF00175">
    <property type="entry name" value="NAD_binding_1"/>
    <property type="match status" value="1"/>
</dbReference>
<dbReference type="Pfam" id="PF00174">
    <property type="entry name" value="Oxidored_molyb"/>
    <property type="match status" value="1"/>
</dbReference>
<dbReference type="PIRSF" id="PIRSF000233">
    <property type="entry name" value="Nitr_rd_NADH"/>
    <property type="match status" value="1"/>
</dbReference>
<dbReference type="PRINTS" id="PR00406">
    <property type="entry name" value="CYTB5RDTASE"/>
</dbReference>
<dbReference type="PRINTS" id="PR00363">
    <property type="entry name" value="CYTOCHROMEB5"/>
</dbReference>
<dbReference type="PRINTS" id="PR00407">
    <property type="entry name" value="EUMOPTERIN"/>
</dbReference>
<dbReference type="PRINTS" id="PR00371">
    <property type="entry name" value="FPNCR"/>
</dbReference>
<dbReference type="SMART" id="SM01117">
    <property type="entry name" value="Cyt-b5"/>
    <property type="match status" value="1"/>
</dbReference>
<dbReference type="SUPFAM" id="SSF55856">
    <property type="entry name" value="Cytochrome b5-like heme/steroid binding domain"/>
    <property type="match status" value="1"/>
</dbReference>
<dbReference type="SUPFAM" id="SSF81296">
    <property type="entry name" value="E set domains"/>
    <property type="match status" value="1"/>
</dbReference>
<dbReference type="SUPFAM" id="SSF52343">
    <property type="entry name" value="Ferredoxin reductase-like, C-terminal NADP-linked domain"/>
    <property type="match status" value="1"/>
</dbReference>
<dbReference type="SUPFAM" id="SSF56524">
    <property type="entry name" value="Oxidoreductase molybdopterin-binding domain"/>
    <property type="match status" value="1"/>
</dbReference>
<dbReference type="SUPFAM" id="SSF63380">
    <property type="entry name" value="Riboflavin synthase domain-like"/>
    <property type="match status" value="1"/>
</dbReference>
<dbReference type="PROSITE" id="PS00191">
    <property type="entry name" value="CYTOCHROME_B5_1"/>
    <property type="match status" value="1"/>
</dbReference>
<dbReference type="PROSITE" id="PS50255">
    <property type="entry name" value="CYTOCHROME_B5_2"/>
    <property type="match status" value="1"/>
</dbReference>
<dbReference type="PROSITE" id="PS51384">
    <property type="entry name" value="FAD_FR"/>
    <property type="match status" value="1"/>
</dbReference>
<dbReference type="PROSITE" id="PS00559">
    <property type="entry name" value="MOLYBDOPTERIN_EUK"/>
    <property type="match status" value="1"/>
</dbReference>
<keyword id="KW-1015">Disulfide bond</keyword>
<keyword id="KW-0274">FAD</keyword>
<keyword id="KW-0285">Flavoprotein</keyword>
<keyword id="KW-0349">Heme</keyword>
<keyword id="KW-0359">Herbicide resistance</keyword>
<keyword id="KW-0408">Iron</keyword>
<keyword id="KW-0479">Metal-binding</keyword>
<keyword id="KW-0500">Molybdenum</keyword>
<keyword id="KW-0520">NAD</keyword>
<keyword id="KW-0534">Nitrate assimilation</keyword>
<keyword id="KW-0560">Oxidoreductase</keyword>
<keyword id="KW-1185">Reference proteome</keyword>
<gene>
    <name type="primary">NIA2</name>
    <name type="synonym">CHL3</name>
    <name type="ordered locus">At1g37130</name>
    <name type="ORF">F28L22.2</name>
</gene>
<protein>
    <recommendedName>
        <fullName>Nitrate reductase [NADH] 2</fullName>
        <shortName>NR2</shortName>
        <ecNumber>1.7.1.1</ecNumber>
    </recommendedName>
</protein>
<feature type="chain" id="PRO_0000166050" description="Nitrate reductase [NADH] 2">
    <location>
        <begin position="1"/>
        <end position="917"/>
    </location>
</feature>
<feature type="domain" description="Cytochrome b5 heme-binding" evidence="6">
    <location>
        <begin position="542"/>
        <end position="617"/>
    </location>
</feature>
<feature type="domain" description="FAD-binding FR-type" evidence="7">
    <location>
        <begin position="660"/>
        <end position="772"/>
    </location>
</feature>
<feature type="region of interest" description="Disordered" evidence="8">
    <location>
        <begin position="1"/>
        <end position="72"/>
    </location>
</feature>
<feature type="compositionally biased region" description="Polar residues" evidence="8">
    <location>
        <begin position="37"/>
        <end position="47"/>
    </location>
</feature>
<feature type="compositionally biased region" description="Acidic residues" evidence="8">
    <location>
        <begin position="57"/>
        <end position="67"/>
    </location>
</feature>
<feature type="binding site" evidence="4">
    <location>
        <position position="191"/>
    </location>
    <ligand>
        <name>Mo-molybdopterin</name>
        <dbReference type="ChEBI" id="CHEBI:71302"/>
    </ligand>
    <ligandPart>
        <name>Mo</name>
        <dbReference type="ChEBI" id="CHEBI:28685"/>
    </ligandPart>
</feature>
<feature type="binding site" description="axial binding residue" evidence="6">
    <location>
        <position position="577"/>
    </location>
    <ligand>
        <name>heme</name>
        <dbReference type="ChEBI" id="CHEBI:30413"/>
    </ligand>
    <ligandPart>
        <name>Fe</name>
        <dbReference type="ChEBI" id="CHEBI:18248"/>
    </ligandPart>
</feature>
<feature type="binding site" description="axial binding residue" evidence="6">
    <location>
        <position position="600"/>
    </location>
    <ligand>
        <name>heme</name>
        <dbReference type="ChEBI" id="CHEBI:30413"/>
    </ligand>
    <ligandPart>
        <name>Fe</name>
        <dbReference type="ChEBI" id="CHEBI:18248"/>
    </ligandPart>
</feature>
<feature type="binding site" evidence="2">
    <location>
        <begin position="712"/>
        <end position="715"/>
    </location>
    <ligand>
        <name>FAD</name>
        <dbReference type="ChEBI" id="CHEBI:57692"/>
    </ligand>
</feature>
<feature type="binding site" evidence="2">
    <location>
        <begin position="729"/>
        <end position="733"/>
    </location>
    <ligand>
        <name>FAD</name>
        <dbReference type="ChEBI" id="CHEBI:57692"/>
    </ligand>
</feature>
<feature type="binding site" evidence="3">
    <location>
        <position position="734"/>
    </location>
    <ligand>
        <name>FAD</name>
        <dbReference type="ChEBI" id="CHEBI:57692"/>
    </ligand>
</feature>
<feature type="binding site" evidence="2">
    <location>
        <position position="741"/>
    </location>
    <ligand>
        <name>FAD</name>
        <dbReference type="ChEBI" id="CHEBI:57692"/>
    </ligand>
</feature>
<feature type="binding site" evidence="2">
    <location>
        <begin position="746"/>
        <end position="748"/>
    </location>
    <ligand>
        <name>FAD</name>
        <dbReference type="ChEBI" id="CHEBI:57692"/>
    </ligand>
</feature>
<feature type="binding site" evidence="2">
    <location>
        <position position="799"/>
    </location>
    <ligand>
        <name>FAD</name>
        <dbReference type="ChEBI" id="CHEBI:57692"/>
    </ligand>
</feature>
<feature type="disulfide bond" description="Interchain" evidence="5">
    <location>
        <position position="433"/>
    </location>
</feature>
<proteinExistence type="evidence at protein level"/>